<keyword id="KW-0165">Cleavage on pair of basic residues</keyword>
<keyword id="KW-0204">Cytolysis</keyword>
<keyword id="KW-0903">Direct protein sequencing</keyword>
<keyword id="KW-0406">Ion transport</keyword>
<keyword id="KW-0472">Membrane</keyword>
<keyword id="KW-0166">Nematocyst</keyword>
<keyword id="KW-0964">Secreted</keyword>
<keyword id="KW-0732">Signal</keyword>
<keyword id="KW-1052">Target cell membrane</keyword>
<keyword id="KW-1053">Target membrane</keyword>
<keyword id="KW-0800">Toxin</keyword>
<keyword id="KW-0812">Transmembrane</keyword>
<keyword id="KW-0813">Transport</keyword>
<name>ACTP1_ANTAS</name>
<reference key="1">
    <citation type="journal article" date="2009" name="Fish. Sci.">
        <title>Characterization of a new hemolytic protein toxin from the sea anemone Anthopleura asiatica.</title>
        <authorList>
            <person name="Kohno Y."/>
            <person name="Satoh H."/>
            <person name="Iguchi A."/>
            <person name="Nagai H."/>
        </authorList>
    </citation>
    <scope>NUCLEOTIDE SEQUENCE [MRNA]</scope>
    <scope>PROTEIN SEQUENCE OF 35-83; 104-111; 155-160; 187-193 AND 196-212</scope>
    <scope>FUNCTION</scope>
</reference>
<reference key="2">
    <citation type="journal article" date="2009" name="Toxicon">
        <title>Molecular mechanism of pore formation by actinoporins.</title>
        <authorList>
            <person name="Kristan K.C."/>
            <person name="Viero G."/>
            <person name="Dalla Serra M."/>
            <person name="Macek P."/>
            <person name="Anderluh G."/>
        </authorList>
    </citation>
    <scope>REVIEW</scope>
</reference>
<reference key="3">
    <citation type="journal article" date="2012" name="Toxicon">
        <title>Development of a rational nomenclature for naming peptide and protein toxins from sea anemones.</title>
        <authorList>
            <person name="Oliveira J.S."/>
            <person name="Fuentes-Silva D."/>
            <person name="King G.F."/>
        </authorList>
    </citation>
    <scope>NOMENCLATURE</scope>
</reference>
<comment type="function">
    <text evidence="1 6">Pore-forming protein that forms cation-selective hydrophilic pores of around 1 nm and causes cytolysis. Pore formation is a multi-step process that involves specific recognition of membrane sphingomyelin (but neither cholesterol nor phosphatidylcholine) using aromatic rich region and adjacent phosphocholine (POC) binding site, firm binding to the membrane (mainly driven by hydrophobic interactions) accompanied by the transfer of the N-terminal region to the lipid-water interface and finally pore formation after oligomerization of monomers (By similarity). This protein shows potent hemolytic activity (EC(50)=8.8 ng/ml) that is specifically inhibited by sphingomyelin. Shows no phospholipase A2 activity, nor antimicrobial activity against the four bacteria tested. Is lethal to crayfish (Ref.1).</text>
</comment>
<comment type="subunit">
    <text evidence="2">Octamer or nonamer in membranes. Monomer in the soluble state.</text>
</comment>
<comment type="subcellular location">
    <subcellularLocation>
        <location evidence="2">Secreted</location>
    </subcellularLocation>
    <subcellularLocation>
        <location evidence="3">Nematocyst</location>
    </subcellularLocation>
    <subcellularLocation>
        <location evidence="2">Target cell membrane</location>
    </subcellularLocation>
    <text evidence="2">Forms an alpha-helical membrane channel in the prey.</text>
</comment>
<comment type="domain">
    <text evidence="4">Composed of a long N-terminal alpha-helix and a core region rich in beta-sheet structures. Before the pore formation, the alpha-helix binds the lipid membrane, partitions into the lipid-water interface and stabilizes the monomeric molecule on the membrane. Finally, it traverses the bilayer, thus forming the transmembrane pore.</text>
</comment>
<comment type="toxic dose">
    <text>LD(100) is 0.58 mg/kg to crayfish.</text>
</comment>
<comment type="similarity">
    <text evidence="9">Belongs to the actinoporin family. Sea anemone subfamily.</text>
</comment>
<dbReference type="EMBL" id="AB479475">
    <property type="protein sequence ID" value="BAH80315.1"/>
    <property type="molecule type" value="mRNA"/>
</dbReference>
<dbReference type="SMR" id="C5NSL2"/>
<dbReference type="GO" id="GO:0005576">
    <property type="term" value="C:extracellular region"/>
    <property type="evidence" value="ECO:0007669"/>
    <property type="project" value="UniProtKB-SubCell"/>
</dbReference>
<dbReference type="GO" id="GO:0042151">
    <property type="term" value="C:nematocyst"/>
    <property type="evidence" value="ECO:0007669"/>
    <property type="project" value="UniProtKB-SubCell"/>
</dbReference>
<dbReference type="GO" id="GO:0044218">
    <property type="term" value="C:other organism cell membrane"/>
    <property type="evidence" value="ECO:0007669"/>
    <property type="project" value="UniProtKB-KW"/>
</dbReference>
<dbReference type="GO" id="GO:0046930">
    <property type="term" value="C:pore complex"/>
    <property type="evidence" value="ECO:0007669"/>
    <property type="project" value="InterPro"/>
</dbReference>
<dbReference type="GO" id="GO:0015267">
    <property type="term" value="F:channel activity"/>
    <property type="evidence" value="ECO:0007669"/>
    <property type="project" value="InterPro"/>
</dbReference>
<dbReference type="GO" id="GO:0090729">
    <property type="term" value="F:toxin activity"/>
    <property type="evidence" value="ECO:0007669"/>
    <property type="project" value="UniProtKB-KW"/>
</dbReference>
<dbReference type="GO" id="GO:0051715">
    <property type="term" value="P:cytolysis in another organism"/>
    <property type="evidence" value="ECO:0007669"/>
    <property type="project" value="InterPro"/>
</dbReference>
<dbReference type="GO" id="GO:0006812">
    <property type="term" value="P:monoatomic cation transport"/>
    <property type="evidence" value="ECO:0007669"/>
    <property type="project" value="InterPro"/>
</dbReference>
<dbReference type="GO" id="GO:0046931">
    <property type="term" value="P:pore complex assembly"/>
    <property type="evidence" value="ECO:0007669"/>
    <property type="project" value="InterPro"/>
</dbReference>
<dbReference type="FunFam" id="2.60.270.20:FF:000001">
    <property type="entry name" value="DELTA-actitoxin-Afr1a"/>
    <property type="match status" value="1"/>
</dbReference>
<dbReference type="Gene3D" id="2.60.270.20">
    <property type="entry name" value="Cytolysin/lectin"/>
    <property type="match status" value="1"/>
</dbReference>
<dbReference type="InterPro" id="IPR050677">
    <property type="entry name" value="Actinoporin_PFT"/>
</dbReference>
<dbReference type="InterPro" id="IPR009104">
    <property type="entry name" value="Anemon_actinoporin-like"/>
</dbReference>
<dbReference type="InterPro" id="IPR015926">
    <property type="entry name" value="Cytolysin/lectin"/>
</dbReference>
<dbReference type="PANTHER" id="PTHR40388">
    <property type="entry name" value="BRYOPORIN"/>
    <property type="match status" value="1"/>
</dbReference>
<dbReference type="PANTHER" id="PTHR40388:SF1">
    <property type="entry name" value="BRYOPORIN"/>
    <property type="match status" value="1"/>
</dbReference>
<dbReference type="Pfam" id="PF06369">
    <property type="entry name" value="Anemone_cytotox"/>
    <property type="match status" value="1"/>
</dbReference>
<dbReference type="SUPFAM" id="SSF63724">
    <property type="entry name" value="Cytolysin/lectin"/>
    <property type="match status" value="1"/>
</dbReference>
<sequence>MSRLIIAFIVVTMVCSAIALPKKKVEPLEKDEKRSLAVAGAVIEGGNLVMSVLDRILEAIGDVNRKIAIGVENQSGKSWTAMNTYFRSGTSDVVLPHSVPSGKALLYDGQKTRGPVATGVVGVFAYAMSDGNTLAVMFSIPYDYNLYSNWWNVKTYSGMKRADQSMYEDLYYHASPFKGDNGWHSRNLGYGLKCRGFMNSSGAAKLEIHVSRA</sequence>
<organism>
    <name type="scientific">Anthopleura asiatica</name>
    <name type="common">Sea anemone</name>
    <dbReference type="NCBI Taxonomy" id="160217"/>
    <lineage>
        <taxon>Eukaryota</taxon>
        <taxon>Metazoa</taxon>
        <taxon>Cnidaria</taxon>
        <taxon>Anthozoa</taxon>
        <taxon>Hexacorallia</taxon>
        <taxon>Actiniaria</taxon>
        <taxon>Actiniidae</taxon>
        <taxon>Anthopleura</taxon>
    </lineage>
</organism>
<protein>
    <recommendedName>
        <fullName evidence="7">DELTA-actitoxin-Aas1a</fullName>
        <shortName evidence="7">DELTA-AITX-Aas1a</shortName>
    </recommendedName>
    <alternativeName>
        <fullName evidence="8">Bandaporin</fullName>
        <shortName evidence="8">Cytolysin bp-1</shortName>
    </alternativeName>
</protein>
<accession>C5NSL2</accession>
<evidence type="ECO:0000250" key="1"/>
<evidence type="ECO:0000250" key="2">
    <source>
        <dbReference type="UniProtKB" id="B9W5G6"/>
    </source>
</evidence>
<evidence type="ECO:0000250" key="3">
    <source>
        <dbReference type="UniProtKB" id="P07845"/>
    </source>
</evidence>
<evidence type="ECO:0000250" key="4">
    <source>
        <dbReference type="UniProtKB" id="P61914"/>
    </source>
</evidence>
<evidence type="ECO:0000255" key="5"/>
<evidence type="ECO:0000269" key="6">
    <source ref="1"/>
</evidence>
<evidence type="ECO:0000303" key="7">
    <source>
    </source>
</evidence>
<evidence type="ECO:0000303" key="8">
    <source ref="1"/>
</evidence>
<evidence type="ECO:0000305" key="9"/>
<proteinExistence type="evidence at protein level"/>
<feature type="signal peptide" evidence="5">
    <location>
        <begin position="1"/>
        <end position="19"/>
    </location>
</feature>
<feature type="propeptide" id="PRO_0000395609" evidence="6">
    <location>
        <begin position="20"/>
        <end position="34"/>
    </location>
</feature>
<feature type="chain" id="PRO_0000395610" description="DELTA-actitoxin-Aas1a">
    <location>
        <begin position="35"/>
        <end position="213"/>
    </location>
</feature>
<feature type="region of interest" description="Plays an important role in the hemolytic activity" evidence="3">
    <location>
        <begin position="37"/>
        <end position="46"/>
    </location>
</feature>
<feature type="region of interest" description="N-terminal region" evidence="4">
    <location>
        <begin position="45"/>
        <end position="64"/>
    </location>
</feature>
<feature type="region of interest" description="Trp-rich region, which is important for the binding to lipid membrane" evidence="4">
    <location>
        <begin position="139"/>
        <end position="154"/>
    </location>
</feature>
<feature type="short sequence motif" description="Cell attachment site, crucial for protein stability" evidence="3 5">
    <location>
        <begin position="178"/>
        <end position="180"/>
    </location>
</feature>
<feature type="binding site" evidence="3">
    <location>
        <position position="88"/>
    </location>
    <ligand>
        <name>phosphocholine</name>
        <dbReference type="ChEBI" id="CHEBI:295975"/>
    </ligand>
</feature>
<feature type="binding site" evidence="3">
    <location>
        <position position="121"/>
    </location>
    <ligand>
        <name>phosphocholine</name>
        <dbReference type="ChEBI" id="CHEBI:295975"/>
    </ligand>
</feature>
<feature type="binding site" evidence="3">
    <location>
        <position position="139"/>
    </location>
    <ligand>
        <name>phosphocholine</name>
        <dbReference type="ChEBI" id="CHEBI:295975"/>
    </ligand>
</feature>
<feature type="binding site" evidence="3">
    <location>
        <position position="141"/>
    </location>
    <ligand>
        <name>phosphocholine</name>
        <dbReference type="ChEBI" id="CHEBI:295975"/>
    </ligand>
</feature>
<feature type="binding site" evidence="3">
    <location>
        <position position="167"/>
    </location>
    <ligand>
        <name>phosphocholine</name>
        <dbReference type="ChEBI" id="CHEBI:295975"/>
    </ligand>
</feature>
<feature type="binding site" evidence="3">
    <location>
        <position position="171"/>
    </location>
    <ligand>
        <name>phosphocholine</name>
        <dbReference type="ChEBI" id="CHEBI:295975"/>
    </ligand>
</feature>
<feature type="binding site" evidence="3">
    <location>
        <position position="172"/>
    </location>
    <ligand>
        <name>phosphocholine</name>
        <dbReference type="ChEBI" id="CHEBI:295975"/>
    </ligand>
</feature>
<feature type="site" description="Important in the initial contact with the lipid membrane" evidence="4">
    <location>
        <position position="147"/>
    </location>
</feature>